<reference key="1">
    <citation type="journal article" date="2002" name="Environ. Microbiol.">
        <title>Complete genome sequence and comparative analysis of the metabolically versatile Pseudomonas putida KT2440.</title>
        <authorList>
            <person name="Nelson K.E."/>
            <person name="Weinel C."/>
            <person name="Paulsen I.T."/>
            <person name="Dodson R.J."/>
            <person name="Hilbert H."/>
            <person name="Martins dos Santos V.A.P."/>
            <person name="Fouts D.E."/>
            <person name="Gill S.R."/>
            <person name="Pop M."/>
            <person name="Holmes M."/>
            <person name="Brinkac L.M."/>
            <person name="Beanan M.J."/>
            <person name="DeBoy R.T."/>
            <person name="Daugherty S.C."/>
            <person name="Kolonay J.F."/>
            <person name="Madupu R."/>
            <person name="Nelson W.C."/>
            <person name="White O."/>
            <person name="Peterson J.D."/>
            <person name="Khouri H.M."/>
            <person name="Hance I."/>
            <person name="Chris Lee P."/>
            <person name="Holtzapple E.K."/>
            <person name="Scanlan D."/>
            <person name="Tran K."/>
            <person name="Moazzez A."/>
            <person name="Utterback T.R."/>
            <person name="Rizzo M."/>
            <person name="Lee K."/>
            <person name="Kosack D."/>
            <person name="Moestl D."/>
            <person name="Wedler H."/>
            <person name="Lauber J."/>
            <person name="Stjepandic D."/>
            <person name="Hoheisel J."/>
            <person name="Straetz M."/>
            <person name="Heim S."/>
            <person name="Kiewitz C."/>
            <person name="Eisen J.A."/>
            <person name="Timmis K.N."/>
            <person name="Duesterhoeft A."/>
            <person name="Tuemmler B."/>
            <person name="Fraser C.M."/>
        </authorList>
    </citation>
    <scope>NUCLEOTIDE SEQUENCE [LARGE SCALE GENOMIC DNA]</scope>
    <source>
        <strain>ATCC 47054 / DSM 6125 / CFBP 8728 / NCIMB 11950 / KT2440</strain>
    </source>
</reference>
<dbReference type="EMBL" id="AE015451">
    <property type="protein sequence ID" value="AAN68456.1"/>
    <property type="molecule type" value="Genomic_DNA"/>
</dbReference>
<dbReference type="RefSeq" id="NP_744992.1">
    <property type="nucleotide sequence ID" value="NC_002947.4"/>
</dbReference>
<dbReference type="RefSeq" id="WP_010953754.1">
    <property type="nucleotide sequence ID" value="NZ_CP169744.1"/>
</dbReference>
<dbReference type="SMR" id="Q88J01"/>
<dbReference type="STRING" id="160488.PP_2848"/>
<dbReference type="PaxDb" id="160488-PP_2848"/>
<dbReference type="DNASU" id="1042740"/>
<dbReference type="KEGG" id="ppu:PP_2848"/>
<dbReference type="PATRIC" id="fig|160488.4.peg.3021"/>
<dbReference type="eggNOG" id="COG0830">
    <property type="taxonomic scope" value="Bacteria"/>
</dbReference>
<dbReference type="HOGENOM" id="CLU_049215_2_1_6"/>
<dbReference type="OrthoDB" id="9798772at2"/>
<dbReference type="PhylomeDB" id="Q88J01"/>
<dbReference type="BioCyc" id="PPUT160488:G1G01-3028-MONOMER"/>
<dbReference type="Proteomes" id="UP000000556">
    <property type="component" value="Chromosome"/>
</dbReference>
<dbReference type="GO" id="GO:0005737">
    <property type="term" value="C:cytoplasm"/>
    <property type="evidence" value="ECO:0007669"/>
    <property type="project" value="UniProtKB-SubCell"/>
</dbReference>
<dbReference type="GO" id="GO:0016151">
    <property type="term" value="F:nickel cation binding"/>
    <property type="evidence" value="ECO:0007669"/>
    <property type="project" value="UniProtKB-UniRule"/>
</dbReference>
<dbReference type="Gene3D" id="1.10.4190.10">
    <property type="entry name" value="Urease accessory protein UreF"/>
    <property type="match status" value="1"/>
</dbReference>
<dbReference type="HAMAP" id="MF_01385">
    <property type="entry name" value="UreF"/>
    <property type="match status" value="1"/>
</dbReference>
<dbReference type="InterPro" id="IPR002639">
    <property type="entry name" value="UreF"/>
</dbReference>
<dbReference type="InterPro" id="IPR038277">
    <property type="entry name" value="UreF_sf"/>
</dbReference>
<dbReference type="PANTHER" id="PTHR33620">
    <property type="entry name" value="UREASE ACCESSORY PROTEIN F"/>
    <property type="match status" value="1"/>
</dbReference>
<dbReference type="PANTHER" id="PTHR33620:SF1">
    <property type="entry name" value="UREASE ACCESSORY PROTEIN F"/>
    <property type="match status" value="1"/>
</dbReference>
<dbReference type="Pfam" id="PF01730">
    <property type="entry name" value="UreF"/>
    <property type="match status" value="1"/>
</dbReference>
<dbReference type="PIRSF" id="PIRSF009467">
    <property type="entry name" value="Ureas_acces_UreF"/>
    <property type="match status" value="1"/>
</dbReference>
<sequence length="224" mass="24412">MNSDLALLRLLQLASPGLPVGGFTYSQGLEWAVEAGWVRGVDSFAGWQREQVHDTLACLDWPVLARLYHACQAKDAEAFGHWSRFLLANRETAELRLEEQQRGAALARLLDGWQLGQAPAWRASLELTQLGGMAWLAAHWAIPLRQLALGHGFAWLEGAVMAGVKLVPFGQQAAQTLLRDLGADLPAALDQALALGDDQLGGGLPLLAIASSRHETQYTRLFRS</sequence>
<accession>Q88J01</accession>
<evidence type="ECO:0000255" key="1">
    <source>
        <dbReference type="HAMAP-Rule" id="MF_01385"/>
    </source>
</evidence>
<proteinExistence type="inferred from homology"/>
<organism>
    <name type="scientific">Pseudomonas putida (strain ATCC 47054 / DSM 6125 / CFBP 8728 / NCIMB 11950 / KT2440)</name>
    <dbReference type="NCBI Taxonomy" id="160488"/>
    <lineage>
        <taxon>Bacteria</taxon>
        <taxon>Pseudomonadati</taxon>
        <taxon>Pseudomonadota</taxon>
        <taxon>Gammaproteobacteria</taxon>
        <taxon>Pseudomonadales</taxon>
        <taxon>Pseudomonadaceae</taxon>
        <taxon>Pseudomonas</taxon>
    </lineage>
</organism>
<protein>
    <recommendedName>
        <fullName evidence="1">Urease accessory protein UreF</fullName>
    </recommendedName>
</protein>
<feature type="chain" id="PRO_0000344153" description="Urease accessory protein UreF">
    <location>
        <begin position="1"/>
        <end position="224"/>
    </location>
</feature>
<comment type="function">
    <text evidence="1">Required for maturation of urease via the functional incorporation of the urease nickel metallocenter.</text>
</comment>
<comment type="subunit">
    <text evidence="1">UreD, UreF and UreG form a complex that acts as a GTP-hydrolysis-dependent molecular chaperone, activating the urease apoprotein by helping to assemble the nickel containing metallocenter of UreC. The UreE protein probably delivers the nickel.</text>
</comment>
<comment type="subcellular location">
    <subcellularLocation>
        <location evidence="1">Cytoplasm</location>
    </subcellularLocation>
</comment>
<comment type="similarity">
    <text evidence="1">Belongs to the UreF family.</text>
</comment>
<name>UREF_PSEPK</name>
<gene>
    <name evidence="1" type="primary">ureF</name>
    <name type="ordered locus">PP_2848</name>
</gene>
<keyword id="KW-0143">Chaperone</keyword>
<keyword id="KW-0963">Cytoplasm</keyword>
<keyword id="KW-0996">Nickel insertion</keyword>
<keyword id="KW-1185">Reference proteome</keyword>